<evidence type="ECO:0000250" key="1">
    <source>
        <dbReference type="UniProtKB" id="Q05998"/>
    </source>
</evidence>
<evidence type="ECO:0000250" key="2">
    <source>
        <dbReference type="UniProtKB" id="Q08485"/>
    </source>
</evidence>
<evidence type="ECO:0000255" key="3"/>
<evidence type="ECO:0000256" key="4">
    <source>
        <dbReference type="SAM" id="MobiDB-lite"/>
    </source>
</evidence>
<evidence type="ECO:0000269" key="5">
    <source>
    </source>
</evidence>
<evidence type="ECO:0000269" key="6">
    <source>
    </source>
</evidence>
<evidence type="ECO:0000305" key="7"/>
<comment type="function">
    <text evidence="6">Low affinity thiamine transporter responsible for intake of thiamine. It is possible that the primary function is the uptake of closely related compounds and that thiamine transport is a secondary activity of these proteins.</text>
</comment>
<comment type="subcellular location">
    <subcellularLocation>
        <location>Membrane</location>
        <topology>Multi-pass membrane protein</topology>
    </subcellularLocation>
</comment>
<comment type="induction">
    <text evidence="5">Induced by limited extracellular thiamine levels.</text>
</comment>
<comment type="similarity">
    <text evidence="7">Belongs to the purine-cytosine permease (2.A.39) family.</text>
</comment>
<protein>
    <recommendedName>
        <fullName>Thiamine transporter THI72</fullName>
    </recommendedName>
</protein>
<feature type="chain" id="PRO_0000197928" description="Thiamine transporter THI72">
    <location>
        <begin position="1"/>
        <end position="599"/>
    </location>
</feature>
<feature type="transmembrane region" description="Helical" evidence="3">
    <location>
        <begin position="42"/>
        <end position="62"/>
    </location>
</feature>
<feature type="transmembrane region" description="Helical" evidence="3">
    <location>
        <begin position="78"/>
        <end position="98"/>
    </location>
</feature>
<feature type="transmembrane region" description="Helical" evidence="3">
    <location>
        <begin position="112"/>
        <end position="132"/>
    </location>
</feature>
<feature type="transmembrane region" description="Helical" evidence="3">
    <location>
        <begin position="174"/>
        <end position="194"/>
    </location>
</feature>
<feature type="transmembrane region" description="Helical" evidence="3">
    <location>
        <begin position="197"/>
        <end position="217"/>
    </location>
</feature>
<feature type="transmembrane region" description="Helical" evidence="3">
    <location>
        <begin position="280"/>
        <end position="300"/>
    </location>
</feature>
<feature type="transmembrane region" description="Helical" evidence="3">
    <location>
        <begin position="333"/>
        <end position="353"/>
    </location>
</feature>
<feature type="transmembrane region" description="Helical" evidence="3">
    <location>
        <begin position="372"/>
        <end position="392"/>
    </location>
</feature>
<feature type="transmembrane region" description="Helical" evidence="3">
    <location>
        <begin position="395"/>
        <end position="415"/>
    </location>
</feature>
<feature type="transmembrane region" description="Helical" evidence="3">
    <location>
        <begin position="447"/>
        <end position="467"/>
    </location>
</feature>
<feature type="transmembrane region" description="Helical" evidence="3">
    <location>
        <begin position="484"/>
        <end position="504"/>
    </location>
</feature>
<feature type="region of interest" description="Disordered" evidence="4">
    <location>
        <begin position="553"/>
        <end position="599"/>
    </location>
</feature>
<feature type="compositionally biased region" description="Basic and acidic residues" evidence="4">
    <location>
        <begin position="579"/>
        <end position="590"/>
    </location>
</feature>
<feature type="modified residue" description="Phosphoserine" evidence="1">
    <location>
        <position position="560"/>
    </location>
</feature>
<feature type="modified residue" description="Phosphoserine" evidence="2">
    <location>
        <position position="572"/>
    </location>
</feature>
<organism>
    <name type="scientific">Saccharomyces cerevisiae (strain ATCC 204508 / S288c)</name>
    <name type="common">Baker's yeast</name>
    <dbReference type="NCBI Taxonomy" id="559292"/>
    <lineage>
        <taxon>Eukaryota</taxon>
        <taxon>Fungi</taxon>
        <taxon>Dikarya</taxon>
        <taxon>Ascomycota</taxon>
        <taxon>Saccharomycotina</taxon>
        <taxon>Saccharomycetes</taxon>
        <taxon>Saccharomycetales</taxon>
        <taxon>Saccharomycetaceae</taxon>
        <taxon>Saccharomyces</taxon>
    </lineage>
</organism>
<accession>Q08579</accession>
<accession>D6W2P8</accession>
<sequence>MSFGTRISRALRFLEIPVKNRASVNFLRNPDLQPIKSVNQTWGFWSNFAYWGVLSFNVGMWIGGSSALTVGLSYSETIGAFIIADLLTILFALANSCPGYDWKVGFTLAQRFVFGIYGSALGIIIRILMSIVYYGSNAWLGGLCVNMILDSWSHHYLHLPNTLSSKVAMTTKELIGFIIFHILTAFCYFMKPYHMNYILIWSCVGTFFAMLGMVIYLTKSAHGVGDLFTSTHSTVTGSKKAWAWVYTISYWYGSVSPGCTNQSDFSRFGSSNCAIWTGTIVALLIPATLIPVFGIIGASACEKLYGQTFWMPMDIFDNWLTTNYSAGARAATFFCGFCFVMSQISYTISNCGFASGMDLAGLLPKYVDIKRGAIFAACVSWACLPWNFYNSSSTFLTVMSSFGVVMTPIITVMICDNFLIRKRQYSVTNAFVLKGEYYFTKGVNWRAIVAWVCGMAPGLPGIAWEVNNDYFHNTGIINFFYGDSFFSFLISFFVYWGLCLLFPFKITVKHDDKDYYGAFTDEEARKKGMVPYSEISEEEIRAYTLGECFTSGHEYKPESSDDELPELTKTSSENTKVFEIVHQKDNEKESSTSSEKQIA</sequence>
<name>THI72_YEAST</name>
<reference key="1">
    <citation type="journal article" date="1997" name="Nature">
        <title>The nucleotide sequence of Saccharomyces cerevisiae chromosome XV.</title>
        <authorList>
            <person name="Dujon B."/>
            <person name="Albermann K."/>
            <person name="Aldea M."/>
            <person name="Alexandraki D."/>
            <person name="Ansorge W."/>
            <person name="Arino J."/>
            <person name="Benes V."/>
            <person name="Bohn C."/>
            <person name="Bolotin-Fukuhara M."/>
            <person name="Bordonne R."/>
            <person name="Boyer J."/>
            <person name="Camasses A."/>
            <person name="Casamayor A."/>
            <person name="Casas C."/>
            <person name="Cheret G."/>
            <person name="Cziepluch C."/>
            <person name="Daignan-Fornier B."/>
            <person name="Dang V.-D."/>
            <person name="de Haan M."/>
            <person name="Delius H."/>
            <person name="Durand P."/>
            <person name="Fairhead C."/>
            <person name="Feldmann H."/>
            <person name="Gaillon L."/>
            <person name="Galisson F."/>
            <person name="Gamo F.-J."/>
            <person name="Gancedo C."/>
            <person name="Goffeau A."/>
            <person name="Goulding S.E."/>
            <person name="Grivell L.A."/>
            <person name="Habbig B."/>
            <person name="Hand N.J."/>
            <person name="Hani J."/>
            <person name="Hattenhorst U."/>
            <person name="Hebling U."/>
            <person name="Hernando Y."/>
            <person name="Herrero E."/>
            <person name="Heumann K."/>
            <person name="Hiesel R."/>
            <person name="Hilger F."/>
            <person name="Hofmann B."/>
            <person name="Hollenberg C.P."/>
            <person name="Hughes B."/>
            <person name="Jauniaux J.-C."/>
            <person name="Kalogeropoulos A."/>
            <person name="Katsoulou C."/>
            <person name="Kordes E."/>
            <person name="Lafuente M.J."/>
            <person name="Landt O."/>
            <person name="Louis E.J."/>
            <person name="Maarse A.C."/>
            <person name="Madania A."/>
            <person name="Mannhaupt G."/>
            <person name="Marck C."/>
            <person name="Martin R.P."/>
            <person name="Mewes H.-W."/>
            <person name="Michaux G."/>
            <person name="Paces V."/>
            <person name="Parle-McDermott A.G."/>
            <person name="Pearson B.M."/>
            <person name="Perrin A."/>
            <person name="Pettersson B."/>
            <person name="Poch O."/>
            <person name="Pohl T.M."/>
            <person name="Poirey R."/>
            <person name="Portetelle D."/>
            <person name="Pujol A."/>
            <person name="Purnelle B."/>
            <person name="Ramezani Rad M."/>
            <person name="Rechmann S."/>
            <person name="Schwager C."/>
            <person name="Schweizer M."/>
            <person name="Sor F."/>
            <person name="Sterky F."/>
            <person name="Tarassov I.A."/>
            <person name="Teodoru C."/>
            <person name="Tettelin H."/>
            <person name="Thierry A."/>
            <person name="Tobiasch E."/>
            <person name="Tzermia M."/>
            <person name="Uhlen M."/>
            <person name="Unseld M."/>
            <person name="Valens M."/>
            <person name="Vandenbol M."/>
            <person name="Vetter I."/>
            <person name="Vlcek C."/>
            <person name="Voet M."/>
            <person name="Volckaert G."/>
            <person name="Voss H."/>
            <person name="Wambutt R."/>
            <person name="Wedler H."/>
            <person name="Wiemann S."/>
            <person name="Winsor B."/>
            <person name="Wolfe K.H."/>
            <person name="Zollner A."/>
            <person name="Zumstein E."/>
            <person name="Kleine K."/>
        </authorList>
    </citation>
    <scope>NUCLEOTIDE SEQUENCE [LARGE SCALE GENOMIC DNA]</scope>
    <source>
        <strain>ATCC 204508 / S288c</strain>
    </source>
</reference>
<reference key="2">
    <citation type="journal article" date="2014" name="G3 (Bethesda)">
        <title>The reference genome sequence of Saccharomyces cerevisiae: Then and now.</title>
        <authorList>
            <person name="Engel S.R."/>
            <person name="Dietrich F.S."/>
            <person name="Fisk D.G."/>
            <person name="Binkley G."/>
            <person name="Balakrishnan R."/>
            <person name="Costanzo M.C."/>
            <person name="Dwight S.S."/>
            <person name="Hitz B.C."/>
            <person name="Karra K."/>
            <person name="Nash R.S."/>
            <person name="Weng S."/>
            <person name="Wong E.D."/>
            <person name="Lloyd P."/>
            <person name="Skrzypek M.S."/>
            <person name="Miyasato S.R."/>
            <person name="Simison M."/>
            <person name="Cherry J.M."/>
        </authorList>
    </citation>
    <scope>GENOME REANNOTATION</scope>
    <source>
        <strain>ATCC 204508 / S288c</strain>
    </source>
</reference>
<reference key="3">
    <citation type="journal article" date="1997" name="J. Biol. Chem.">
        <title>Isolation and characterization of a thiamin transport gene, THI10, from Saccharomyces cerevisiae.</title>
        <authorList>
            <person name="Enjo F."/>
            <person name="Nosaka K."/>
            <person name="Ogata M."/>
            <person name="Iwashima A."/>
            <person name="Nishimura H."/>
        </authorList>
    </citation>
    <scope>FUNCTION</scope>
</reference>
<reference key="4">
    <citation type="journal article" date="2005" name="Mol. Microbiol.">
        <title>Genetic regulation mediated by thiamin pyrophosphate-binding motif in Saccharomyces cerevisiae.</title>
        <authorList>
            <person name="Nosaka K."/>
            <person name="Onozuka M."/>
            <person name="Konno H."/>
            <person name="Kawasaki Y."/>
            <person name="Nishimura H."/>
            <person name="Sano M."/>
            <person name="Akaji K."/>
        </authorList>
    </citation>
    <scope>INDUCTION</scope>
</reference>
<proteinExistence type="evidence at transcript level"/>
<gene>
    <name type="primary">THI72</name>
    <name type="ordered locus">YOR192C</name>
</gene>
<dbReference type="EMBL" id="Z75100">
    <property type="protein sequence ID" value="CAA99401.1"/>
    <property type="molecule type" value="Genomic_DNA"/>
</dbReference>
<dbReference type="EMBL" id="BK006948">
    <property type="protein sequence ID" value="DAA10964.1"/>
    <property type="molecule type" value="Genomic_DNA"/>
</dbReference>
<dbReference type="PIR" id="S67084">
    <property type="entry name" value="S67084"/>
</dbReference>
<dbReference type="RefSeq" id="NP_014835.3">
    <property type="nucleotide sequence ID" value="NM_001183611.3"/>
</dbReference>
<dbReference type="SMR" id="Q08579"/>
<dbReference type="BioGRID" id="34587">
    <property type="interactions" value="62"/>
</dbReference>
<dbReference type="DIP" id="DIP-7926N"/>
<dbReference type="FunCoup" id="Q08579">
    <property type="interactions" value="82"/>
</dbReference>
<dbReference type="IntAct" id="Q08579">
    <property type="interactions" value="2"/>
</dbReference>
<dbReference type="MINT" id="Q08579"/>
<dbReference type="STRING" id="4932.YOR192C"/>
<dbReference type="PaxDb" id="4932-YOR192C"/>
<dbReference type="PeptideAtlas" id="Q08579"/>
<dbReference type="EnsemblFungi" id="YOR192C_mRNA">
    <property type="protein sequence ID" value="YOR192C"/>
    <property type="gene ID" value="YOR192C"/>
</dbReference>
<dbReference type="GeneID" id="854364"/>
<dbReference type="KEGG" id="sce:YOR192C"/>
<dbReference type="AGR" id="SGD:S000005718"/>
<dbReference type="SGD" id="S000005718">
    <property type="gene designation" value="THI72"/>
</dbReference>
<dbReference type="VEuPathDB" id="FungiDB:YOR192C"/>
<dbReference type="eggNOG" id="KOG2466">
    <property type="taxonomic scope" value="Eukaryota"/>
</dbReference>
<dbReference type="GeneTree" id="ENSGT00940000176299"/>
<dbReference type="HOGENOM" id="CLU_021555_3_0_1"/>
<dbReference type="InParanoid" id="Q08579"/>
<dbReference type="OMA" id="GLCVNMI"/>
<dbReference type="OrthoDB" id="2018619at2759"/>
<dbReference type="BioCyc" id="YEAST:G3O-33701-MONOMER"/>
<dbReference type="BioGRID-ORCS" id="854364">
    <property type="hits" value="0 hits in 10 CRISPR screens"/>
</dbReference>
<dbReference type="PRO" id="PR:Q08579"/>
<dbReference type="Proteomes" id="UP000002311">
    <property type="component" value="Chromosome XV"/>
</dbReference>
<dbReference type="RNAct" id="Q08579">
    <property type="molecule type" value="protein"/>
</dbReference>
<dbReference type="GO" id="GO:0071944">
    <property type="term" value="C:cell periphery"/>
    <property type="evidence" value="ECO:0007005"/>
    <property type="project" value="SGD"/>
</dbReference>
<dbReference type="GO" id="GO:0000324">
    <property type="term" value="C:fungal-type vacuole"/>
    <property type="evidence" value="ECO:0007005"/>
    <property type="project" value="SGD"/>
</dbReference>
<dbReference type="GO" id="GO:0005886">
    <property type="term" value="C:plasma membrane"/>
    <property type="evidence" value="ECO:0000318"/>
    <property type="project" value="GO_Central"/>
</dbReference>
<dbReference type="GO" id="GO:1903089">
    <property type="term" value="F:5-amino-1-ribofuranosylimidazole-4-carboxamide transmembrane transporter activity"/>
    <property type="evidence" value="ECO:0000316"/>
    <property type="project" value="SGD"/>
</dbReference>
<dbReference type="GO" id="GO:0015205">
    <property type="term" value="F:nucleobase transmembrane transporter activity"/>
    <property type="evidence" value="ECO:0000318"/>
    <property type="project" value="GO_Central"/>
</dbReference>
<dbReference type="GO" id="GO:1903088">
    <property type="term" value="P:5-amino-1-ribofuranosylimidazole-4-carboxamide transmembrane transport"/>
    <property type="evidence" value="ECO:0000316"/>
    <property type="project" value="SGD"/>
</dbReference>
<dbReference type="GO" id="GO:0015851">
    <property type="term" value="P:nucleobase transport"/>
    <property type="evidence" value="ECO:0000318"/>
    <property type="project" value="GO_Central"/>
</dbReference>
<dbReference type="GO" id="GO:0015888">
    <property type="term" value="P:thiamine transport"/>
    <property type="evidence" value="ECO:0000316"/>
    <property type="project" value="SGD"/>
</dbReference>
<dbReference type="CDD" id="cd11482">
    <property type="entry name" value="SLC-NCS1sbd_NRT1-like"/>
    <property type="match status" value="1"/>
</dbReference>
<dbReference type="FunFam" id="1.10.4160.10:FF:000005">
    <property type="entry name" value="Thiamine transporter"/>
    <property type="match status" value="1"/>
</dbReference>
<dbReference type="Gene3D" id="1.10.4160.10">
    <property type="entry name" value="Hydantoin permease"/>
    <property type="match status" value="1"/>
</dbReference>
<dbReference type="InterPro" id="IPR012681">
    <property type="entry name" value="NCS1"/>
</dbReference>
<dbReference type="InterPro" id="IPR001248">
    <property type="entry name" value="Pur-cyt_permease"/>
</dbReference>
<dbReference type="InterPro" id="IPR045225">
    <property type="entry name" value="Uracil/uridine/allantoin_perm"/>
</dbReference>
<dbReference type="NCBIfam" id="TIGR00800">
    <property type="entry name" value="ncs1"/>
    <property type="match status" value="1"/>
</dbReference>
<dbReference type="PANTHER" id="PTHR30618">
    <property type="entry name" value="NCS1 FAMILY PURINE/PYRIMIDINE TRANSPORTER"/>
    <property type="match status" value="1"/>
</dbReference>
<dbReference type="PANTHER" id="PTHR30618:SF15">
    <property type="entry name" value="NICOTINAMIDE RIBOSIDE TRANSPORTER 1-RELATED"/>
    <property type="match status" value="1"/>
</dbReference>
<dbReference type="Pfam" id="PF02133">
    <property type="entry name" value="Transp_cyt_pur"/>
    <property type="match status" value="1"/>
</dbReference>
<keyword id="KW-0472">Membrane</keyword>
<keyword id="KW-0597">Phosphoprotein</keyword>
<keyword id="KW-1185">Reference proteome</keyword>
<keyword id="KW-0812">Transmembrane</keyword>
<keyword id="KW-1133">Transmembrane helix</keyword>
<keyword id="KW-0813">Transport</keyword>